<sequence length="228" mass="25311">MKIKEMVTSEMPRERLLSHGAKSLSNTELLAILINTGRKGFSSIDISNELLKSASNLNELKKSSINDLIKVKGIGLQKAITLKAAFELGERMGRRAENNRIKITQPSDVADYMIPTMKDLTQEHFVILLLNSKNVVIKETCVFKGTLNSSIVHPREIFSIAVRENANAIIAVHNHPSGDVTPSQEDIITTMRLKECGLILGIDLLDHIIIGDNRFTSLVEAGYFDEND</sequence>
<reference key="1">
    <citation type="journal article" date="2008" name="J. Bacteriol.">
        <title>Genome sequence of Staphylococcus aureus strain Newman and comparative analysis of staphylococcal genomes: polymorphism and evolution of two major pathogenicity islands.</title>
        <authorList>
            <person name="Baba T."/>
            <person name="Bae T."/>
            <person name="Schneewind O."/>
            <person name="Takeuchi F."/>
            <person name="Hiramatsu K."/>
        </authorList>
    </citation>
    <scope>NUCLEOTIDE SEQUENCE [LARGE SCALE GENOMIC DNA]</scope>
    <source>
        <strain>Newman</strain>
    </source>
</reference>
<feature type="chain" id="PRO_1000089850" description="UPF0758 protein NWMN_1555">
    <location>
        <begin position="1"/>
        <end position="228"/>
    </location>
</feature>
<feature type="domain" description="MPN" evidence="1">
    <location>
        <begin position="102"/>
        <end position="224"/>
    </location>
</feature>
<feature type="short sequence motif" description="JAMM motif" evidence="1">
    <location>
        <begin position="173"/>
        <end position="186"/>
    </location>
</feature>
<feature type="binding site" evidence="1">
    <location>
        <position position="173"/>
    </location>
    <ligand>
        <name>Zn(2+)</name>
        <dbReference type="ChEBI" id="CHEBI:29105"/>
        <note>catalytic</note>
    </ligand>
</feature>
<feature type="binding site" evidence="1">
    <location>
        <position position="175"/>
    </location>
    <ligand>
        <name>Zn(2+)</name>
        <dbReference type="ChEBI" id="CHEBI:29105"/>
        <note>catalytic</note>
    </ligand>
</feature>
<feature type="binding site" evidence="1">
    <location>
        <position position="186"/>
    </location>
    <ligand>
        <name>Zn(2+)</name>
        <dbReference type="ChEBI" id="CHEBI:29105"/>
        <note>catalytic</note>
    </ligand>
</feature>
<organism>
    <name type="scientific">Staphylococcus aureus (strain Newman)</name>
    <dbReference type="NCBI Taxonomy" id="426430"/>
    <lineage>
        <taxon>Bacteria</taxon>
        <taxon>Bacillati</taxon>
        <taxon>Bacillota</taxon>
        <taxon>Bacilli</taxon>
        <taxon>Bacillales</taxon>
        <taxon>Staphylococcaceae</taxon>
        <taxon>Staphylococcus</taxon>
    </lineage>
</organism>
<proteinExistence type="inferred from homology"/>
<gene>
    <name type="ordered locus">NWMN_1555</name>
</gene>
<protein>
    <recommendedName>
        <fullName>UPF0758 protein NWMN_1555</fullName>
    </recommendedName>
</protein>
<dbReference type="EMBL" id="AP009351">
    <property type="protein sequence ID" value="BAF67827.1"/>
    <property type="molecule type" value="Genomic_DNA"/>
</dbReference>
<dbReference type="SMR" id="A6QHJ5"/>
<dbReference type="KEGG" id="sae:NWMN_1555"/>
<dbReference type="HOGENOM" id="CLU_073529_0_2_9"/>
<dbReference type="Proteomes" id="UP000006386">
    <property type="component" value="Chromosome"/>
</dbReference>
<dbReference type="GO" id="GO:0046872">
    <property type="term" value="F:metal ion binding"/>
    <property type="evidence" value="ECO:0007669"/>
    <property type="project" value="UniProtKB-KW"/>
</dbReference>
<dbReference type="GO" id="GO:0008237">
    <property type="term" value="F:metallopeptidase activity"/>
    <property type="evidence" value="ECO:0007669"/>
    <property type="project" value="UniProtKB-KW"/>
</dbReference>
<dbReference type="GO" id="GO:0006508">
    <property type="term" value="P:proteolysis"/>
    <property type="evidence" value="ECO:0007669"/>
    <property type="project" value="UniProtKB-KW"/>
</dbReference>
<dbReference type="CDD" id="cd08071">
    <property type="entry name" value="MPN_DUF2466"/>
    <property type="match status" value="1"/>
</dbReference>
<dbReference type="Gene3D" id="3.40.140.10">
    <property type="entry name" value="Cytidine Deaminase, domain 2"/>
    <property type="match status" value="1"/>
</dbReference>
<dbReference type="InterPro" id="IPR037518">
    <property type="entry name" value="MPN"/>
</dbReference>
<dbReference type="InterPro" id="IPR025657">
    <property type="entry name" value="RadC_JAB"/>
</dbReference>
<dbReference type="InterPro" id="IPR010994">
    <property type="entry name" value="RuvA_2-like"/>
</dbReference>
<dbReference type="InterPro" id="IPR001405">
    <property type="entry name" value="UPF0758"/>
</dbReference>
<dbReference type="InterPro" id="IPR020891">
    <property type="entry name" value="UPF0758_CS"/>
</dbReference>
<dbReference type="InterPro" id="IPR046778">
    <property type="entry name" value="UPF0758_N"/>
</dbReference>
<dbReference type="NCBIfam" id="NF000642">
    <property type="entry name" value="PRK00024.1"/>
    <property type="match status" value="1"/>
</dbReference>
<dbReference type="NCBIfam" id="TIGR00608">
    <property type="entry name" value="radc"/>
    <property type="match status" value="1"/>
</dbReference>
<dbReference type="PANTHER" id="PTHR30471">
    <property type="entry name" value="DNA REPAIR PROTEIN RADC"/>
    <property type="match status" value="1"/>
</dbReference>
<dbReference type="PANTHER" id="PTHR30471:SF3">
    <property type="entry name" value="UPF0758 PROTEIN YEES-RELATED"/>
    <property type="match status" value="1"/>
</dbReference>
<dbReference type="Pfam" id="PF04002">
    <property type="entry name" value="RadC"/>
    <property type="match status" value="1"/>
</dbReference>
<dbReference type="Pfam" id="PF20582">
    <property type="entry name" value="UPF0758_N"/>
    <property type="match status" value="1"/>
</dbReference>
<dbReference type="SUPFAM" id="SSF102712">
    <property type="entry name" value="JAB1/MPN domain"/>
    <property type="match status" value="1"/>
</dbReference>
<dbReference type="SUPFAM" id="SSF47781">
    <property type="entry name" value="RuvA domain 2-like"/>
    <property type="match status" value="1"/>
</dbReference>
<dbReference type="PROSITE" id="PS50249">
    <property type="entry name" value="MPN"/>
    <property type="match status" value="1"/>
</dbReference>
<dbReference type="PROSITE" id="PS01302">
    <property type="entry name" value="UPF0758"/>
    <property type="match status" value="1"/>
</dbReference>
<accession>A6QHJ5</accession>
<comment type="similarity">
    <text evidence="2">Belongs to the UPF0758 family.</text>
</comment>
<name>Y1555_STAAE</name>
<evidence type="ECO:0000255" key="1">
    <source>
        <dbReference type="PROSITE-ProRule" id="PRU01182"/>
    </source>
</evidence>
<evidence type="ECO:0000305" key="2"/>
<keyword id="KW-0378">Hydrolase</keyword>
<keyword id="KW-0479">Metal-binding</keyword>
<keyword id="KW-0482">Metalloprotease</keyword>
<keyword id="KW-0645">Protease</keyword>
<keyword id="KW-0862">Zinc</keyword>